<feature type="initiator methionine" description="Removed" evidence="1">
    <location>
        <position position="1"/>
    </location>
</feature>
<feature type="chain" id="PRO_0000294379" description="Malate dehydrogenase">
    <location>
        <begin position="2"/>
        <end position="327"/>
    </location>
</feature>
<feature type="active site" description="Proton acceptor" evidence="2">
    <location>
        <position position="188"/>
    </location>
</feature>
<feature type="binding site" evidence="2">
    <location>
        <begin position="12"/>
        <end position="18"/>
    </location>
    <ligand>
        <name>NAD(+)</name>
        <dbReference type="ChEBI" id="CHEBI:57540"/>
    </ligand>
</feature>
<feature type="binding site" evidence="2">
    <location>
        <position position="93"/>
    </location>
    <ligand>
        <name>substrate</name>
    </ligand>
</feature>
<feature type="binding site" evidence="2">
    <location>
        <position position="99"/>
    </location>
    <ligand>
        <name>substrate</name>
    </ligand>
</feature>
<feature type="binding site" evidence="2">
    <location>
        <position position="106"/>
    </location>
    <ligand>
        <name>NAD(+)</name>
        <dbReference type="ChEBI" id="CHEBI:57540"/>
    </ligand>
</feature>
<feature type="binding site" evidence="2">
    <location>
        <position position="113"/>
    </location>
    <ligand>
        <name>NAD(+)</name>
        <dbReference type="ChEBI" id="CHEBI:57540"/>
    </ligand>
</feature>
<feature type="binding site" evidence="2">
    <location>
        <begin position="130"/>
        <end position="132"/>
    </location>
    <ligand>
        <name>NAD(+)</name>
        <dbReference type="ChEBI" id="CHEBI:57540"/>
    </ligand>
</feature>
<feature type="binding site" evidence="2">
    <location>
        <position position="132"/>
    </location>
    <ligand>
        <name>substrate</name>
    </ligand>
</feature>
<feature type="binding site" evidence="2">
    <location>
        <position position="163"/>
    </location>
    <ligand>
        <name>substrate</name>
    </ligand>
</feature>
<reference key="1">
    <citation type="journal article" date="2010" name="Genome Biol. Evol.">
        <title>Continuing evolution of Burkholderia mallei through genome reduction and large-scale rearrangements.</title>
        <authorList>
            <person name="Losada L."/>
            <person name="Ronning C.M."/>
            <person name="DeShazer D."/>
            <person name="Woods D."/>
            <person name="Fedorova N."/>
            <person name="Kim H.S."/>
            <person name="Shabalina S.A."/>
            <person name="Pearson T.R."/>
            <person name="Brinkac L."/>
            <person name="Tan P."/>
            <person name="Nandi T."/>
            <person name="Crabtree J."/>
            <person name="Badger J."/>
            <person name="Beckstrom-Sternberg S."/>
            <person name="Saqib M."/>
            <person name="Schutzer S.E."/>
            <person name="Keim P."/>
            <person name="Nierman W.C."/>
        </authorList>
    </citation>
    <scope>NUCLEOTIDE SEQUENCE [LARGE SCALE GENOMIC DNA]</scope>
    <source>
        <strain>1106a</strain>
    </source>
</reference>
<proteinExistence type="inferred from homology"/>
<keyword id="KW-0520">NAD</keyword>
<keyword id="KW-0560">Oxidoreductase</keyword>
<keyword id="KW-0816">Tricarboxylic acid cycle</keyword>
<gene>
    <name evidence="2" type="primary">mdh</name>
    <name type="ordered locus">BURPS1106A_A2336</name>
</gene>
<sequence>MAKPAKRVAVTGAAGQIAYSLLFRIANGDLLGKDQPVILQLLDLPQAQAAVKGVVMELDDCAFPLLAGVVITDDPKVAFKDADVALLVGARPRSKGMERKDLLSANAEIFTVQGAALNEVASRDVKVLVVGNPANTNAYIAMKSAPDLPKKNFTAMLRLDHNRALSQLAAKSGKPVASIEKLAVWGNHSPTMYPDFRFATAEGESLLKLINDDVWNRDTFIPTVGKRGAAIIEARGLSSAASAANAAIDHVRDWVLGTNGKWVTMGIPSDGSYGIPEDIIYGVPVICENGEYKRVEGLEIDAFSREKMDGTLAELLEERDGVAHLLK</sequence>
<dbReference type="EC" id="1.1.1.37" evidence="2"/>
<dbReference type="EMBL" id="CP000573">
    <property type="protein sequence ID" value="ABN95269.1"/>
    <property type="molecule type" value="Genomic_DNA"/>
</dbReference>
<dbReference type="RefSeq" id="WP_004187735.1">
    <property type="nucleotide sequence ID" value="NC_009078.1"/>
</dbReference>
<dbReference type="SMR" id="A3P7Q9"/>
<dbReference type="KEGG" id="bpl:BURPS1106A_A2336"/>
<dbReference type="HOGENOM" id="CLU_040727_2_0_4"/>
<dbReference type="Proteomes" id="UP000006738">
    <property type="component" value="Chromosome II"/>
</dbReference>
<dbReference type="GO" id="GO:0030060">
    <property type="term" value="F:L-malate dehydrogenase (NAD+) activity"/>
    <property type="evidence" value="ECO:0007669"/>
    <property type="project" value="UniProtKB-UniRule"/>
</dbReference>
<dbReference type="GO" id="GO:0006108">
    <property type="term" value="P:malate metabolic process"/>
    <property type="evidence" value="ECO:0007669"/>
    <property type="project" value="InterPro"/>
</dbReference>
<dbReference type="GO" id="GO:0006099">
    <property type="term" value="P:tricarboxylic acid cycle"/>
    <property type="evidence" value="ECO:0007669"/>
    <property type="project" value="UniProtKB-UniRule"/>
</dbReference>
<dbReference type="CDD" id="cd01338">
    <property type="entry name" value="MDH_chloroplast-like"/>
    <property type="match status" value="1"/>
</dbReference>
<dbReference type="FunFam" id="3.40.50.720:FF:000010">
    <property type="entry name" value="Malate dehydrogenase"/>
    <property type="match status" value="1"/>
</dbReference>
<dbReference type="FunFam" id="3.90.110.10:FF:000002">
    <property type="entry name" value="Malate dehydrogenase"/>
    <property type="match status" value="1"/>
</dbReference>
<dbReference type="Gene3D" id="3.90.110.10">
    <property type="entry name" value="Lactate dehydrogenase/glycoside hydrolase, family 4, C-terminal"/>
    <property type="match status" value="1"/>
</dbReference>
<dbReference type="Gene3D" id="3.40.50.720">
    <property type="entry name" value="NAD(P)-binding Rossmann-like Domain"/>
    <property type="match status" value="1"/>
</dbReference>
<dbReference type="HAMAP" id="MF_01517">
    <property type="entry name" value="Malate_dehydrog_2"/>
    <property type="match status" value="1"/>
</dbReference>
<dbReference type="InterPro" id="IPR001557">
    <property type="entry name" value="L-lactate/malate_DH"/>
</dbReference>
<dbReference type="InterPro" id="IPR022383">
    <property type="entry name" value="Lactate/malate_DH_C"/>
</dbReference>
<dbReference type="InterPro" id="IPR001236">
    <property type="entry name" value="Lactate/malate_DH_N"/>
</dbReference>
<dbReference type="InterPro" id="IPR015955">
    <property type="entry name" value="Lactate_DH/Glyco_Ohase_4_C"/>
</dbReference>
<dbReference type="InterPro" id="IPR010945">
    <property type="entry name" value="Malate_DH_type2"/>
</dbReference>
<dbReference type="InterPro" id="IPR036291">
    <property type="entry name" value="NAD(P)-bd_dom_sf"/>
</dbReference>
<dbReference type="NCBIfam" id="TIGR01759">
    <property type="entry name" value="MalateDH-SF1"/>
    <property type="match status" value="1"/>
</dbReference>
<dbReference type="NCBIfam" id="NF003916">
    <property type="entry name" value="PRK05442.1"/>
    <property type="match status" value="1"/>
</dbReference>
<dbReference type="PANTHER" id="PTHR23382">
    <property type="entry name" value="MALATE DEHYDROGENASE"/>
    <property type="match status" value="1"/>
</dbReference>
<dbReference type="Pfam" id="PF02866">
    <property type="entry name" value="Ldh_1_C"/>
    <property type="match status" value="1"/>
</dbReference>
<dbReference type="Pfam" id="PF00056">
    <property type="entry name" value="Ldh_1_N"/>
    <property type="match status" value="1"/>
</dbReference>
<dbReference type="PIRSF" id="PIRSF000102">
    <property type="entry name" value="Lac_mal_DH"/>
    <property type="match status" value="1"/>
</dbReference>
<dbReference type="SUPFAM" id="SSF56327">
    <property type="entry name" value="LDH C-terminal domain-like"/>
    <property type="match status" value="1"/>
</dbReference>
<dbReference type="SUPFAM" id="SSF51735">
    <property type="entry name" value="NAD(P)-binding Rossmann-fold domains"/>
    <property type="match status" value="1"/>
</dbReference>
<name>MDH_BURP0</name>
<comment type="function">
    <text evidence="2">Catalyzes the reversible oxidation of malate to oxaloacetate.</text>
</comment>
<comment type="catalytic activity">
    <reaction evidence="2">
        <text>(S)-malate + NAD(+) = oxaloacetate + NADH + H(+)</text>
        <dbReference type="Rhea" id="RHEA:21432"/>
        <dbReference type="ChEBI" id="CHEBI:15378"/>
        <dbReference type="ChEBI" id="CHEBI:15589"/>
        <dbReference type="ChEBI" id="CHEBI:16452"/>
        <dbReference type="ChEBI" id="CHEBI:57540"/>
        <dbReference type="ChEBI" id="CHEBI:57945"/>
        <dbReference type="EC" id="1.1.1.37"/>
    </reaction>
</comment>
<comment type="similarity">
    <text evidence="2">Belongs to the LDH/MDH superfamily. MDH type 2 family.</text>
</comment>
<organism>
    <name type="scientific">Burkholderia pseudomallei (strain 1106a)</name>
    <dbReference type="NCBI Taxonomy" id="357348"/>
    <lineage>
        <taxon>Bacteria</taxon>
        <taxon>Pseudomonadati</taxon>
        <taxon>Pseudomonadota</taxon>
        <taxon>Betaproteobacteria</taxon>
        <taxon>Burkholderiales</taxon>
        <taxon>Burkholderiaceae</taxon>
        <taxon>Burkholderia</taxon>
        <taxon>pseudomallei group</taxon>
    </lineage>
</organism>
<accession>A3P7Q9</accession>
<evidence type="ECO:0000250" key="1"/>
<evidence type="ECO:0000255" key="2">
    <source>
        <dbReference type="HAMAP-Rule" id="MF_01517"/>
    </source>
</evidence>
<protein>
    <recommendedName>
        <fullName evidence="2">Malate dehydrogenase</fullName>
        <ecNumber evidence="2">1.1.1.37</ecNumber>
    </recommendedName>
</protein>